<protein>
    <recommendedName>
        <fullName>Nucleoside diphosphate kinase, mitochondrial</fullName>
        <shortName>NDK</shortName>
        <shortName>NDP kinase, mitochondrial</shortName>
        <ecNumber>2.7.4.6</ecNumber>
    </recommendedName>
</protein>
<dbReference type="EC" id="2.7.4.6"/>
<dbReference type="EMBL" id="U89605">
    <property type="protein sequence ID" value="AAC78439.1"/>
    <property type="molecule type" value="mRNA"/>
</dbReference>
<dbReference type="EMBL" id="AF018267">
    <property type="protein sequence ID" value="AAC78438.1"/>
    <property type="molecule type" value="Genomic_DNA"/>
</dbReference>
<dbReference type="SMR" id="P87355"/>
<dbReference type="eggNOG" id="KOG0888">
    <property type="taxonomic scope" value="Eukaryota"/>
</dbReference>
<dbReference type="BRENDA" id="2.7.4.6">
    <property type="organism ID" value="1579"/>
</dbReference>
<dbReference type="GO" id="GO:0016020">
    <property type="term" value="C:membrane"/>
    <property type="evidence" value="ECO:0007669"/>
    <property type="project" value="UniProtKB-KW"/>
</dbReference>
<dbReference type="GO" id="GO:0005758">
    <property type="term" value="C:mitochondrial intermembrane space"/>
    <property type="evidence" value="ECO:0007669"/>
    <property type="project" value="UniProtKB-SubCell"/>
</dbReference>
<dbReference type="GO" id="GO:0005759">
    <property type="term" value="C:mitochondrial matrix"/>
    <property type="evidence" value="ECO:0007669"/>
    <property type="project" value="UniProtKB-SubCell"/>
</dbReference>
<dbReference type="GO" id="GO:0005524">
    <property type="term" value="F:ATP binding"/>
    <property type="evidence" value="ECO:0007669"/>
    <property type="project" value="UniProtKB-KW"/>
</dbReference>
<dbReference type="GO" id="GO:0008289">
    <property type="term" value="F:lipid binding"/>
    <property type="evidence" value="ECO:0007669"/>
    <property type="project" value="UniProtKB-KW"/>
</dbReference>
<dbReference type="GO" id="GO:0046872">
    <property type="term" value="F:metal ion binding"/>
    <property type="evidence" value="ECO:0007669"/>
    <property type="project" value="UniProtKB-KW"/>
</dbReference>
<dbReference type="GO" id="GO:0004550">
    <property type="term" value="F:nucleoside diphosphate kinase activity"/>
    <property type="evidence" value="ECO:0007669"/>
    <property type="project" value="UniProtKB-EC"/>
</dbReference>
<dbReference type="GO" id="GO:0006241">
    <property type="term" value="P:CTP biosynthetic process"/>
    <property type="evidence" value="ECO:0007669"/>
    <property type="project" value="InterPro"/>
</dbReference>
<dbReference type="GO" id="GO:0006183">
    <property type="term" value="P:GTP biosynthetic process"/>
    <property type="evidence" value="ECO:0007669"/>
    <property type="project" value="InterPro"/>
</dbReference>
<dbReference type="GO" id="GO:0006228">
    <property type="term" value="P:UTP biosynthetic process"/>
    <property type="evidence" value="ECO:0007669"/>
    <property type="project" value="InterPro"/>
</dbReference>
<dbReference type="CDD" id="cd04413">
    <property type="entry name" value="NDPk_I"/>
    <property type="match status" value="1"/>
</dbReference>
<dbReference type="FunFam" id="3.30.70.141:FF:000017">
    <property type="entry name" value="Nucleoside diphosphate kinase"/>
    <property type="match status" value="1"/>
</dbReference>
<dbReference type="Gene3D" id="3.30.70.141">
    <property type="entry name" value="Nucleoside diphosphate kinase-like domain"/>
    <property type="match status" value="1"/>
</dbReference>
<dbReference type="HAMAP" id="MF_00451">
    <property type="entry name" value="NDP_kinase"/>
    <property type="match status" value="1"/>
</dbReference>
<dbReference type="InterPro" id="IPR034907">
    <property type="entry name" value="NDK-like_dom"/>
</dbReference>
<dbReference type="InterPro" id="IPR036850">
    <property type="entry name" value="NDK-like_dom_sf"/>
</dbReference>
<dbReference type="InterPro" id="IPR001564">
    <property type="entry name" value="Nucleoside_diP_kinase"/>
</dbReference>
<dbReference type="InterPro" id="IPR023005">
    <property type="entry name" value="Nucleoside_diP_kinase_AS"/>
</dbReference>
<dbReference type="NCBIfam" id="NF001908">
    <property type="entry name" value="PRK00668.1"/>
    <property type="match status" value="1"/>
</dbReference>
<dbReference type="PANTHER" id="PTHR11349">
    <property type="entry name" value="NUCLEOSIDE DIPHOSPHATE KINASE"/>
    <property type="match status" value="1"/>
</dbReference>
<dbReference type="Pfam" id="PF00334">
    <property type="entry name" value="NDK"/>
    <property type="match status" value="1"/>
</dbReference>
<dbReference type="PRINTS" id="PR01243">
    <property type="entry name" value="NUCDPKINASE"/>
</dbReference>
<dbReference type="SMART" id="SM00562">
    <property type="entry name" value="NDK"/>
    <property type="match status" value="1"/>
</dbReference>
<dbReference type="SUPFAM" id="SSF54919">
    <property type="entry name" value="Nucleoside diphosphate kinase, NDK"/>
    <property type="match status" value="1"/>
</dbReference>
<dbReference type="PROSITE" id="PS00469">
    <property type="entry name" value="NDPK"/>
    <property type="match status" value="1"/>
</dbReference>
<dbReference type="PROSITE" id="PS51374">
    <property type="entry name" value="NDPK_LIKE"/>
    <property type="match status" value="1"/>
</dbReference>
<organism>
    <name type="scientific">Columba livia</name>
    <name type="common">Rock dove</name>
    <dbReference type="NCBI Taxonomy" id="8932"/>
    <lineage>
        <taxon>Eukaryota</taxon>
        <taxon>Metazoa</taxon>
        <taxon>Chordata</taxon>
        <taxon>Craniata</taxon>
        <taxon>Vertebrata</taxon>
        <taxon>Euteleostomi</taxon>
        <taxon>Archelosauria</taxon>
        <taxon>Archosauria</taxon>
        <taxon>Dinosauria</taxon>
        <taxon>Saurischia</taxon>
        <taxon>Theropoda</taxon>
        <taxon>Coelurosauria</taxon>
        <taxon>Aves</taxon>
        <taxon>Neognathae</taxon>
        <taxon>Neoaves</taxon>
        <taxon>Columbimorphae</taxon>
        <taxon>Columbiformes</taxon>
        <taxon>Columbidae</taxon>
        <taxon>Columba</taxon>
    </lineage>
</organism>
<proteinExistence type="evidence at protein level"/>
<sequence>MFRGGTHRLRGQPGLSLPHGPRCYGSAPPELQEKTLVLVKPDAVQRRLVGNVIQRFERRGFKLVAMKLLQADQGLLDKHYQQLRQKPFYPALLAYMTSGPLVAMVWEGYNVVRSTRAMVGDTDSAVAAAGTIRGDFSMHVSRNVVHASDSVETAQREIGFWFQRNELVAWESGDRDYTWGP</sequence>
<evidence type="ECO:0000250" key="1"/>
<evidence type="ECO:0000250" key="2">
    <source>
        <dbReference type="UniProtKB" id="O00746"/>
    </source>
</evidence>
<evidence type="ECO:0000256" key="3">
    <source>
        <dbReference type="SAM" id="MobiDB-lite"/>
    </source>
</evidence>
<evidence type="ECO:0000269" key="4">
    <source>
    </source>
</evidence>
<evidence type="ECO:0000305" key="5"/>
<gene>
    <name type="primary">NME4</name>
</gene>
<name>NDKM_COLLI</name>
<accession>P87355</accession>
<accession>O42206</accession>
<keyword id="KW-0067">ATP-binding</keyword>
<keyword id="KW-0903">Direct protein sequencing</keyword>
<keyword id="KW-0418">Kinase</keyword>
<keyword id="KW-0446">Lipid-binding</keyword>
<keyword id="KW-0460">Magnesium</keyword>
<keyword id="KW-0472">Membrane</keyword>
<keyword id="KW-0479">Metal-binding</keyword>
<keyword id="KW-0496">Mitochondrion</keyword>
<keyword id="KW-0546">Nucleotide metabolism</keyword>
<keyword id="KW-0547">Nucleotide-binding</keyword>
<keyword id="KW-0597">Phosphoprotein</keyword>
<keyword id="KW-0808">Transferase</keyword>
<keyword id="KW-0809">Transit peptide</keyword>
<feature type="transit peptide" description="Mitochondrion" evidence="4">
    <location>
        <begin position="1"/>
        <end position="24"/>
    </location>
</feature>
<feature type="chain" id="PRO_0000019431" description="Nucleoside diphosphate kinase, mitochondrial">
    <location>
        <begin position="25"/>
        <end position="181"/>
    </location>
</feature>
<feature type="region of interest" description="Disordered" evidence="3">
    <location>
        <begin position="1"/>
        <end position="22"/>
    </location>
</feature>
<feature type="compositionally biased region" description="Basic residues" evidence="3">
    <location>
        <begin position="1"/>
        <end position="10"/>
    </location>
</feature>
<feature type="active site" description="Pros-phosphohistidine intermediate" evidence="1">
    <location>
        <position position="146"/>
    </location>
</feature>
<feature type="binding site" evidence="1">
    <location>
        <position position="40"/>
    </location>
    <ligand>
        <name>ATP</name>
        <dbReference type="ChEBI" id="CHEBI:30616"/>
    </ligand>
</feature>
<feature type="binding site" evidence="1">
    <location>
        <position position="88"/>
    </location>
    <ligand>
        <name>ATP</name>
        <dbReference type="ChEBI" id="CHEBI:30616"/>
    </ligand>
</feature>
<feature type="binding site" evidence="1">
    <location>
        <position position="116"/>
    </location>
    <ligand>
        <name>ATP</name>
        <dbReference type="ChEBI" id="CHEBI:30616"/>
    </ligand>
</feature>
<feature type="binding site" evidence="1">
    <location>
        <position position="122"/>
    </location>
    <ligand>
        <name>ATP</name>
        <dbReference type="ChEBI" id="CHEBI:30616"/>
    </ligand>
</feature>
<feature type="binding site" evidence="1">
    <location>
        <position position="133"/>
    </location>
    <ligand>
        <name>ATP</name>
        <dbReference type="ChEBI" id="CHEBI:30616"/>
    </ligand>
</feature>
<feature type="binding site" evidence="1">
    <location>
        <position position="143"/>
    </location>
    <ligand>
        <name>ATP</name>
        <dbReference type="ChEBI" id="CHEBI:30616"/>
    </ligand>
</feature>
<comment type="function">
    <text evidence="2">Major role in the synthesis of nucleoside triphosphates other than ATP. The ATP gamma phosphate is transferred to the NDP beta phosphate via a ping-pong mechanism, using a phosphorylated active-site intermediate. Through the catalyzed exchange of gamma-phosphate between di- and triphosphonucleosides participates in regulation of intracellular nucleotide homeostasis. Binds to anionic phospholipids, predominantly to cardiolipin; the binding inhibits its phosphotransfer activity. Acts as a mitochondria-specific NDK coupled to respiration. Promotes the redistribution of cardiolipin between the mitochondrial inner membrane and outer membrane which is implicated in pro-apoptotic signaling (By similarity).</text>
</comment>
<comment type="catalytic activity">
    <reaction>
        <text>a 2'-deoxyribonucleoside 5'-diphosphate + ATP = a 2'-deoxyribonucleoside 5'-triphosphate + ADP</text>
        <dbReference type="Rhea" id="RHEA:44640"/>
        <dbReference type="ChEBI" id="CHEBI:30616"/>
        <dbReference type="ChEBI" id="CHEBI:61560"/>
        <dbReference type="ChEBI" id="CHEBI:73316"/>
        <dbReference type="ChEBI" id="CHEBI:456216"/>
        <dbReference type="EC" id="2.7.4.6"/>
    </reaction>
</comment>
<comment type="catalytic activity">
    <reaction>
        <text>a ribonucleoside 5'-diphosphate + ATP = a ribonucleoside 5'-triphosphate + ADP</text>
        <dbReference type="Rhea" id="RHEA:18113"/>
        <dbReference type="ChEBI" id="CHEBI:30616"/>
        <dbReference type="ChEBI" id="CHEBI:57930"/>
        <dbReference type="ChEBI" id="CHEBI:61557"/>
        <dbReference type="ChEBI" id="CHEBI:456216"/>
        <dbReference type="EC" id="2.7.4.6"/>
    </reaction>
</comment>
<comment type="cofactor">
    <cofactor evidence="1">
        <name>Mg(2+)</name>
        <dbReference type="ChEBI" id="CHEBI:18420"/>
    </cofactor>
</comment>
<comment type="activity regulation">
    <text>Feedback inhibition by ADP.</text>
</comment>
<comment type="subcellular location">
    <subcellularLocation>
        <location evidence="2">Mitochondrion intermembrane space</location>
        <topology evidence="5">Peripheral membrane protein</topology>
    </subcellularLocation>
    <subcellularLocation>
        <location evidence="4">Mitochondrion matrix</location>
    </subcellularLocation>
</comment>
<comment type="tissue specificity">
    <text>Highest levels in the liver and kidney with lower levels in the heart, brain and breast muscle.</text>
</comment>
<comment type="similarity">
    <text evidence="5">Belongs to the NDK family.</text>
</comment>
<reference key="1">
    <citation type="submission" date="1998-11" db="EMBL/GenBank/DDBJ databases">
        <authorList>
            <person name="Mehus J.G."/>
            <person name="Milavetz B.I."/>
            <person name="Ivey M.A."/>
            <person name="Lambeth D.O."/>
        </authorList>
    </citation>
    <scope>NUCLEOTIDE SEQUENCE</scope>
    <source>
        <tissue>Liver</tissue>
    </source>
</reference>
<reference key="2">
    <citation type="journal article" date="1997" name="J. Biol. Chem.">
        <title>Characterization and cloning of a nucleoside-diphosphate kinase targeted to matrix of mitochondria in pigeon.</title>
        <authorList>
            <person name="Lambeth D.O."/>
            <person name="Mehus J.G."/>
            <person name="Ivey M.A."/>
            <person name="Milavetz B.I."/>
        </authorList>
    </citation>
    <scope>NUCLEOTIDE SEQUENCE [MRNA] OF 17-181</scope>
    <scope>PROTEIN SEQUENCE OF 25-44</scope>
    <scope>SUBCELLULAR LOCATION</scope>
    <source>
        <tissue>Liver</tissue>
    </source>
</reference>